<organism>
    <name type="scientific">Bacillus thuringiensis (strain Al Hakam)</name>
    <dbReference type="NCBI Taxonomy" id="412694"/>
    <lineage>
        <taxon>Bacteria</taxon>
        <taxon>Bacillati</taxon>
        <taxon>Bacillota</taxon>
        <taxon>Bacilli</taxon>
        <taxon>Bacillales</taxon>
        <taxon>Bacillaceae</taxon>
        <taxon>Bacillus</taxon>
        <taxon>Bacillus cereus group</taxon>
    </lineage>
</organism>
<proteinExistence type="inferred from homology"/>
<gene>
    <name type="ordered locus">BALH_3602</name>
</gene>
<feature type="chain" id="PRO_0000376750" description="N-acetyldiaminopimelate deacetylase">
    <location>
        <begin position="1"/>
        <end position="376"/>
    </location>
</feature>
<feature type="active site" evidence="1">
    <location>
        <position position="69"/>
    </location>
</feature>
<feature type="active site" description="Proton acceptor" evidence="1">
    <location>
        <position position="128"/>
    </location>
</feature>
<protein>
    <recommendedName>
        <fullName evidence="1">N-acetyldiaminopimelate deacetylase</fullName>
        <ecNumber evidence="1">3.5.1.47</ecNumber>
    </recommendedName>
</protein>
<sequence length="376" mass="41896">MAVSKFVQIRRDLHKIPEIGFKEWKTQQYILDYIGTLSNEHVEVKVWRTGVIVKVKGKNPEKVIGYRADIDGLPITEETGYEFASVHEGMMHACGHDLHTTIGLGLLTAAVTERIDDDLVFLFQPAEEGPGGALPMLESEELKEWKPNIILGLHIAPEYPVGTIATKEGLLFANTSELYVDLKGKGGHAAYPHTANDMIVAASHLVTQLQSVISRNVNPLDSAVITIGKITGGTVQNIIAEKSRLEGTIRTLSVESMSRVKSRIEAIVAGIEASFQCEAVIDYGAMYHQVYNHEALTREFMQFVSEQTDMKVITCTEAMTGEDFGYMLQEIPGFMFWLGVNSEYGLHHAKLRPDEEAIEKAIVFLDQYVKWKGTRK</sequence>
<keyword id="KW-0028">Amino-acid biosynthesis</keyword>
<keyword id="KW-0220">Diaminopimelate biosynthesis</keyword>
<keyword id="KW-0378">Hydrolase</keyword>
<keyword id="KW-0457">Lysine biosynthesis</keyword>
<name>DAPEL_BACAH</name>
<accession>A0RHZ2</accession>
<comment type="function">
    <text evidence="1">Catalyzes the conversion of N-acetyl-diaminopimelate to diaminopimelate and acetate.</text>
</comment>
<comment type="catalytic activity">
    <reaction evidence="1">
        <text>N-acetyl-(2S,6S)-2,6-diaminopimelate + H2O = (2S,6S)-2,6-diaminopimelate + acetate</text>
        <dbReference type="Rhea" id="RHEA:20405"/>
        <dbReference type="ChEBI" id="CHEBI:15377"/>
        <dbReference type="ChEBI" id="CHEBI:30089"/>
        <dbReference type="ChEBI" id="CHEBI:57609"/>
        <dbReference type="ChEBI" id="CHEBI:58767"/>
        <dbReference type="EC" id="3.5.1.47"/>
    </reaction>
</comment>
<comment type="pathway">
    <text evidence="1">Amino-acid biosynthesis; L-lysine biosynthesis via DAP pathway; LL-2,6-diaminopimelate from (S)-tetrahydrodipicolinate (acetylase route): step 3/3.</text>
</comment>
<comment type="similarity">
    <text evidence="1">Belongs to the peptidase M20A family. N-acetyldiaminopimelate deacetylase subfamily.</text>
</comment>
<reference key="1">
    <citation type="journal article" date="2007" name="J. Bacteriol.">
        <title>The complete genome sequence of Bacillus thuringiensis Al Hakam.</title>
        <authorList>
            <person name="Challacombe J.F."/>
            <person name="Altherr M.R."/>
            <person name="Xie G."/>
            <person name="Bhotika S.S."/>
            <person name="Brown N."/>
            <person name="Bruce D."/>
            <person name="Campbell C.S."/>
            <person name="Campbell M.L."/>
            <person name="Chen J."/>
            <person name="Chertkov O."/>
            <person name="Cleland C."/>
            <person name="Dimitrijevic M."/>
            <person name="Doggett N.A."/>
            <person name="Fawcett J.J."/>
            <person name="Glavina T."/>
            <person name="Goodwin L.A."/>
            <person name="Green L.D."/>
            <person name="Han C.S."/>
            <person name="Hill K.K."/>
            <person name="Hitchcock P."/>
            <person name="Jackson P.J."/>
            <person name="Keim P."/>
            <person name="Kewalramani A.R."/>
            <person name="Longmire J."/>
            <person name="Lucas S."/>
            <person name="Malfatti S."/>
            <person name="Martinez D."/>
            <person name="McMurry K."/>
            <person name="Meincke L.J."/>
            <person name="Misra M."/>
            <person name="Moseman B.L."/>
            <person name="Mundt M."/>
            <person name="Munk A.C."/>
            <person name="Okinaka R.T."/>
            <person name="Parson-Quintana B."/>
            <person name="Reilly L.P."/>
            <person name="Richardson P."/>
            <person name="Robinson D.L."/>
            <person name="Saunders E."/>
            <person name="Tapia R."/>
            <person name="Tesmer J.G."/>
            <person name="Thayer N."/>
            <person name="Thompson L.S."/>
            <person name="Tice H."/>
            <person name="Ticknor L.O."/>
            <person name="Wills P.L."/>
            <person name="Gilna P."/>
            <person name="Brettin T.S."/>
        </authorList>
    </citation>
    <scope>NUCLEOTIDE SEQUENCE [LARGE SCALE GENOMIC DNA]</scope>
    <source>
        <strain>Al Hakam</strain>
    </source>
</reference>
<evidence type="ECO:0000255" key="1">
    <source>
        <dbReference type="HAMAP-Rule" id="MF_01692"/>
    </source>
</evidence>
<dbReference type="EC" id="3.5.1.47" evidence="1"/>
<dbReference type="EMBL" id="CP000485">
    <property type="protein sequence ID" value="ABK86835.1"/>
    <property type="molecule type" value="Genomic_DNA"/>
</dbReference>
<dbReference type="RefSeq" id="WP_000301166.1">
    <property type="nucleotide sequence ID" value="NC_008600.1"/>
</dbReference>
<dbReference type="SMR" id="A0RHZ2"/>
<dbReference type="MEROPS" id="M20.A27"/>
<dbReference type="KEGG" id="btl:BALH_3602"/>
<dbReference type="HOGENOM" id="CLU_023257_0_1_9"/>
<dbReference type="UniPathway" id="UPA00034">
    <property type="reaction ID" value="UER00024"/>
</dbReference>
<dbReference type="GO" id="GO:0050118">
    <property type="term" value="F:N-acetyldiaminopimelate deacetylase activity"/>
    <property type="evidence" value="ECO:0007669"/>
    <property type="project" value="UniProtKB-UniRule"/>
</dbReference>
<dbReference type="GO" id="GO:0019877">
    <property type="term" value="P:diaminopimelate biosynthetic process"/>
    <property type="evidence" value="ECO:0007669"/>
    <property type="project" value="UniProtKB-UniRule"/>
</dbReference>
<dbReference type="GO" id="GO:0009089">
    <property type="term" value="P:lysine biosynthetic process via diaminopimelate"/>
    <property type="evidence" value="ECO:0007669"/>
    <property type="project" value="UniProtKB-UniRule"/>
</dbReference>
<dbReference type="CDD" id="cd05670">
    <property type="entry name" value="M20_Acy1_YkuR-like"/>
    <property type="match status" value="1"/>
</dbReference>
<dbReference type="FunFam" id="3.30.70.360:FF:000001">
    <property type="entry name" value="N-acetyldiaminopimelate deacetylase"/>
    <property type="match status" value="1"/>
</dbReference>
<dbReference type="Gene3D" id="3.30.70.360">
    <property type="match status" value="1"/>
</dbReference>
<dbReference type="Gene3D" id="3.40.630.10">
    <property type="entry name" value="Zn peptidases"/>
    <property type="match status" value="1"/>
</dbReference>
<dbReference type="HAMAP" id="MF_01692">
    <property type="entry name" value="DapEL"/>
    <property type="match status" value="1"/>
</dbReference>
<dbReference type="InterPro" id="IPR023905">
    <property type="entry name" value="AcetylDAP_deacetylase"/>
</dbReference>
<dbReference type="InterPro" id="IPR017439">
    <property type="entry name" value="Amidohydrolase"/>
</dbReference>
<dbReference type="InterPro" id="IPR036264">
    <property type="entry name" value="Bact_exopeptidase_dim_dom"/>
</dbReference>
<dbReference type="InterPro" id="IPR002933">
    <property type="entry name" value="Peptidase_M20"/>
</dbReference>
<dbReference type="InterPro" id="IPR011650">
    <property type="entry name" value="Peptidase_M20_dimer"/>
</dbReference>
<dbReference type="NCBIfam" id="TIGR01891">
    <property type="entry name" value="amidohydrolases"/>
    <property type="match status" value="1"/>
</dbReference>
<dbReference type="PANTHER" id="PTHR11014:SF98">
    <property type="entry name" value="N-ACETYLDIAMINOPIMELATE DEACETYLASE"/>
    <property type="match status" value="1"/>
</dbReference>
<dbReference type="PANTHER" id="PTHR11014">
    <property type="entry name" value="PEPTIDASE M20 FAMILY MEMBER"/>
    <property type="match status" value="1"/>
</dbReference>
<dbReference type="Pfam" id="PF07687">
    <property type="entry name" value="M20_dimer"/>
    <property type="match status" value="1"/>
</dbReference>
<dbReference type="Pfam" id="PF01546">
    <property type="entry name" value="Peptidase_M20"/>
    <property type="match status" value="1"/>
</dbReference>
<dbReference type="PIRSF" id="PIRSF005962">
    <property type="entry name" value="Pept_M20D_amidohydro"/>
    <property type="match status" value="1"/>
</dbReference>
<dbReference type="SUPFAM" id="SSF55031">
    <property type="entry name" value="Bacterial exopeptidase dimerisation domain"/>
    <property type="match status" value="1"/>
</dbReference>
<dbReference type="SUPFAM" id="SSF53187">
    <property type="entry name" value="Zn-dependent exopeptidases"/>
    <property type="match status" value="1"/>
</dbReference>